<evidence type="ECO:0000255" key="1">
    <source>
        <dbReference type="HAMAP-Rule" id="MF_00460"/>
    </source>
</evidence>
<gene>
    <name evidence="1" type="primary">rnfH</name>
    <name type="ordered locus">EcolC_1066</name>
</gene>
<protein>
    <recommendedName>
        <fullName evidence="1">Protein RnfH</fullName>
    </recommendedName>
</protein>
<organism>
    <name type="scientific">Escherichia coli (strain ATCC 8739 / DSM 1576 / NBRC 3972 / NCIMB 8545 / WDCM 00012 / Crooks)</name>
    <dbReference type="NCBI Taxonomy" id="481805"/>
    <lineage>
        <taxon>Bacteria</taxon>
        <taxon>Pseudomonadati</taxon>
        <taxon>Pseudomonadota</taxon>
        <taxon>Gammaproteobacteria</taxon>
        <taxon>Enterobacterales</taxon>
        <taxon>Enterobacteriaceae</taxon>
        <taxon>Escherichia</taxon>
    </lineage>
</organism>
<feature type="chain" id="PRO_1000081139" description="Protein RnfH">
    <location>
        <begin position="1"/>
        <end position="96"/>
    </location>
</feature>
<accession>B1IVL6</accession>
<reference key="1">
    <citation type="submission" date="2008-02" db="EMBL/GenBank/DDBJ databases">
        <title>Complete sequence of Escherichia coli C str. ATCC 8739.</title>
        <authorList>
            <person name="Copeland A."/>
            <person name="Lucas S."/>
            <person name="Lapidus A."/>
            <person name="Glavina del Rio T."/>
            <person name="Dalin E."/>
            <person name="Tice H."/>
            <person name="Bruce D."/>
            <person name="Goodwin L."/>
            <person name="Pitluck S."/>
            <person name="Kiss H."/>
            <person name="Brettin T."/>
            <person name="Detter J.C."/>
            <person name="Han C."/>
            <person name="Kuske C.R."/>
            <person name="Schmutz J."/>
            <person name="Larimer F."/>
            <person name="Land M."/>
            <person name="Hauser L."/>
            <person name="Kyrpides N."/>
            <person name="Mikhailova N."/>
            <person name="Ingram L."/>
            <person name="Richardson P."/>
        </authorList>
    </citation>
    <scope>NUCLEOTIDE SEQUENCE [LARGE SCALE GENOMIC DNA]</scope>
    <source>
        <strain>ATCC 8739 / DSM 1576 / NBRC 3972 / NCIMB 8545 / WDCM 00012 / Crooks</strain>
    </source>
</reference>
<proteinExistence type="inferred from homology"/>
<comment type="similarity">
    <text evidence="1">Belongs to the UPF0125 (RnfH) family.</text>
</comment>
<dbReference type="EMBL" id="CP000946">
    <property type="protein sequence ID" value="ACA76733.1"/>
    <property type="molecule type" value="Genomic_DNA"/>
</dbReference>
<dbReference type="RefSeq" id="WP_001117838.1">
    <property type="nucleotide sequence ID" value="NZ_MTFT01000037.1"/>
</dbReference>
<dbReference type="SMR" id="B1IVL6"/>
<dbReference type="KEGG" id="ecl:EcolC_1066"/>
<dbReference type="HOGENOM" id="CLU_150721_1_0_6"/>
<dbReference type="Gene3D" id="3.10.20.280">
    <property type="entry name" value="RnfH-like"/>
    <property type="match status" value="1"/>
</dbReference>
<dbReference type="HAMAP" id="MF_00460">
    <property type="entry name" value="UPF0125_RnfH"/>
    <property type="match status" value="1"/>
</dbReference>
<dbReference type="InterPro" id="IPR016155">
    <property type="entry name" value="Mopterin_synth/thiamin_S_b"/>
</dbReference>
<dbReference type="InterPro" id="IPR005346">
    <property type="entry name" value="RnfH"/>
</dbReference>
<dbReference type="InterPro" id="IPR037021">
    <property type="entry name" value="RnfH_sf"/>
</dbReference>
<dbReference type="NCBIfam" id="NF002490">
    <property type="entry name" value="PRK01777.1"/>
    <property type="match status" value="1"/>
</dbReference>
<dbReference type="PANTHER" id="PTHR37483">
    <property type="entry name" value="UPF0125 PROTEIN RATB"/>
    <property type="match status" value="1"/>
</dbReference>
<dbReference type="PANTHER" id="PTHR37483:SF1">
    <property type="entry name" value="UPF0125 PROTEIN RATB"/>
    <property type="match status" value="1"/>
</dbReference>
<dbReference type="Pfam" id="PF03658">
    <property type="entry name" value="Ub-RnfH"/>
    <property type="match status" value="1"/>
</dbReference>
<dbReference type="SUPFAM" id="SSF54285">
    <property type="entry name" value="MoaD/ThiS"/>
    <property type="match status" value="1"/>
</dbReference>
<name>RNFH_ECOLC</name>
<sequence>MPGKIAVEVAYALPEKQYLQRVTLQEGATVEEAIRASGLLELRTDIDLTKNKVGIYSRPAKLSDSVHDGDRVEIYRPLIADPKELRRQRAEKSANK</sequence>